<evidence type="ECO:0000250" key="1"/>
<evidence type="ECO:0000255" key="2"/>
<evidence type="ECO:0000255" key="3">
    <source>
        <dbReference type="PROSITE-ProRule" id="PRU01005"/>
    </source>
</evidence>
<evidence type="ECO:0000255" key="4">
    <source>
        <dbReference type="PROSITE-ProRule" id="PRU10095"/>
    </source>
</evidence>
<evidence type="ECO:0000269" key="5">
    <source>
    </source>
</evidence>
<evidence type="ECO:0000303" key="6">
    <source>
    </source>
</evidence>
<evidence type="ECO:0000305" key="7"/>
<sequence length="391" mass="44451">MGCRACLRPEASGAVQGRWLGAALSGLCLLSALALLEWLGAPTETAWRAAQGNVDAPNVGSSTAQVPRLLTMSVTRRRRYTLTPARLRWDHFNLTYRVLSFPRNLLSPEETRRGLAAAFRMWSDVSPFSFREVAPERPSDLKIGFYPVNHTDCLVSAVHHCFDGPTGELAHAFFPPHGGIHFDDSEYWVLGPTRYSWKKGVWLTNLVHVAAHEIGHALGLMHSQQDQALMHLNATLRGWKALSQDELWGLHRLYGCLDRIFVCASWARKGFCDVRQRLMKRLCPRSCDFCYEFPFPTVATTTSPTRTKTRLVREGRNMTFHCGQKILHKKGKVYWYKDQEPLEFSYPGYLALGEAQLSIIANAVNEGTYTCVVRRHQRVLSTYSWRVRVRN</sequence>
<protein>
    <recommendedName>
        <fullName>Matrix metalloproteinase-23</fullName>
        <shortName>MMP-23</shortName>
        <ecNumber>3.4.24.-</ecNumber>
    </recommendedName>
    <alternativeName>
        <fullName>Cysteine array matrix metalloproteinase</fullName>
        <shortName>CA-MMP</shortName>
        <shortName>CAMP metalloproteinase</shortName>
    </alternativeName>
    <component>
        <recommendedName>
            <fullName>Matrix metalloproteinase-23, soluble form</fullName>
        </recommendedName>
    </component>
</protein>
<feature type="chain" id="PRO_0000259915" description="Matrix metalloproteinase-23">
    <location>
        <begin position="1"/>
        <end position="391"/>
    </location>
</feature>
<feature type="propeptide" id="PRO_0000259916" evidence="2">
    <location>
        <begin position="1"/>
        <end position="79"/>
    </location>
</feature>
<feature type="chain" id="PRO_0000259917" description="Matrix metalloproteinase-23, soluble form">
    <location>
        <begin position="80"/>
        <end position="391"/>
    </location>
</feature>
<feature type="topological domain" description="Cytoplasmic" evidence="2">
    <location>
        <begin position="1"/>
        <end position="18"/>
    </location>
</feature>
<feature type="transmembrane region" description="Helical" evidence="2">
    <location>
        <begin position="19"/>
        <end position="39"/>
    </location>
</feature>
<feature type="topological domain" description="Lumenal" evidence="2">
    <location>
        <begin position="40"/>
        <end position="391"/>
    </location>
</feature>
<feature type="domain" description="ShKT" evidence="3">
    <location>
        <begin position="256"/>
        <end position="290"/>
    </location>
</feature>
<feature type="domain" description="Ig-like C2-type">
    <location>
        <begin position="298"/>
        <end position="383"/>
    </location>
</feature>
<feature type="active site" evidence="4">
    <location>
        <position position="213"/>
    </location>
</feature>
<feature type="binding site" evidence="4">
    <location>
        <position position="212"/>
    </location>
    <ligand>
        <name>Zn(2+)</name>
        <dbReference type="ChEBI" id="CHEBI:29105"/>
        <note>catalytic</note>
    </ligand>
</feature>
<feature type="binding site" evidence="4">
    <location>
        <position position="216"/>
    </location>
    <ligand>
        <name>Zn(2+)</name>
        <dbReference type="ChEBI" id="CHEBI:29105"/>
        <note>catalytic</note>
    </ligand>
</feature>
<feature type="binding site" evidence="4">
    <location>
        <position position="222"/>
    </location>
    <ligand>
        <name>Zn(2+)</name>
        <dbReference type="ChEBI" id="CHEBI:29105"/>
        <note>catalytic</note>
    </ligand>
</feature>
<feature type="site" description="Cleavage; by furin-like protease" evidence="2">
    <location>
        <begin position="79"/>
        <end position="80"/>
    </location>
</feature>
<feature type="glycosylation site" description="N-linked (GlcNAc...) asparagine" evidence="2">
    <location>
        <position position="93"/>
    </location>
</feature>
<feature type="glycosylation site" description="N-linked (GlcNAc...) asparagine" evidence="2">
    <location>
        <position position="149"/>
    </location>
</feature>
<feature type="glycosylation site" description="N-linked (GlcNAc...) asparagine" evidence="2">
    <location>
        <position position="233"/>
    </location>
</feature>
<feature type="glycosylation site" description="N-linked (GlcNAc...) asparagine" evidence="2">
    <location>
        <position position="317"/>
    </location>
</feature>
<feature type="disulfide bond" evidence="1">
    <location>
        <begin position="256"/>
        <end position="290"/>
    </location>
</feature>
<feature type="disulfide bond" evidence="1">
    <location>
        <begin position="263"/>
        <end position="283"/>
    </location>
</feature>
<feature type="disulfide bond" evidence="1">
    <location>
        <begin position="272"/>
        <end position="287"/>
    </location>
</feature>
<feature type="disulfide bond" evidence="1">
    <location>
        <begin position="322"/>
        <end position="371"/>
    </location>
</feature>
<feature type="splice variant" id="VSP_021561" description="In isoform 2." evidence="6">
    <location>
        <begin position="144"/>
        <end position="157"/>
    </location>
</feature>
<gene>
    <name type="primary">Mmp23</name>
    <name type="synonym">Cammp</name>
</gene>
<comment type="function">
    <text evidence="1">Protease. May regulate the surface expression of some potassium channels by retaining them in the endoplasmic reticulum (By similarity).</text>
</comment>
<comment type="cofactor">
    <cofactor evidence="1">
        <name>Zn(2+)</name>
        <dbReference type="ChEBI" id="CHEBI:29105"/>
    </cofactor>
    <text evidence="1">Binds 1 zinc ion per subunit.</text>
</comment>
<comment type="activity regulation">
    <text>Inhibited by TIMP2.</text>
</comment>
<comment type="subcellular location">
    <subcellularLocation>
        <location evidence="1">Endoplasmic reticulum membrane</location>
        <topology evidence="1">Single-pass type II membrane protein</topology>
    </subcellularLocation>
    <subcellularLocation>
        <location evidence="5">Membrane</location>
        <topology evidence="5">Single-pass type II membrane protein</topology>
    </subcellularLocation>
    <text evidence="1">A secreted form produced by proteolytic cleavage may also exist.</text>
</comment>
<comment type="alternative products">
    <event type="alternative splicing"/>
    <isoform>
        <id>O88676-1</id>
        <name>1</name>
        <sequence type="displayed"/>
    </isoform>
    <isoform>
        <id>O88676-2</id>
        <name>2</name>
        <sequence type="described" ref="VSP_021561"/>
    </isoform>
</comment>
<comment type="tissue specificity">
    <text evidence="5">Expressed at relatively high level in heart, lung and spleen. Not detected in brain, liver, skeletal muscle, kidney and testis.</text>
</comment>
<comment type="developmental stage">
    <text evidence="5">Expressed at relatively high level at 7 days old embryo compared to those at stadges day 11, 15 and 17.</text>
</comment>
<comment type="domain">
    <text evidence="1">The ShKT domain associates with, and blocks several potassium channels in the nanomolar to low micromolar range. The relative affinity is Kv1.6 &gt; Kv1.3 &gt; Kv1.1 = Kv3.2 &gt; Kv1.4 (By similarity).</text>
</comment>
<comment type="PTM">
    <text evidence="1">N-glycosylated.</text>
</comment>
<comment type="PTM">
    <text>Proteolytic cleavage might yield an active form.</text>
</comment>
<comment type="similarity">
    <text evidence="7">Belongs to the peptidase M10A family.</text>
</comment>
<keyword id="KW-0025">Alternative splicing</keyword>
<keyword id="KW-0165">Cleavage on pair of basic residues</keyword>
<keyword id="KW-1015">Disulfide bond</keyword>
<keyword id="KW-0256">Endoplasmic reticulum</keyword>
<keyword id="KW-0325">Glycoprotein</keyword>
<keyword id="KW-0378">Hydrolase</keyword>
<keyword id="KW-0393">Immunoglobulin domain</keyword>
<keyword id="KW-0472">Membrane</keyword>
<keyword id="KW-0479">Metal-binding</keyword>
<keyword id="KW-0645">Protease</keyword>
<keyword id="KW-1185">Reference proteome</keyword>
<keyword id="KW-0735">Signal-anchor</keyword>
<keyword id="KW-0812">Transmembrane</keyword>
<keyword id="KW-1133">Transmembrane helix</keyword>
<keyword id="KW-0862">Zinc</keyword>
<keyword id="KW-0865">Zymogen</keyword>
<organism>
    <name type="scientific">Mus musculus</name>
    <name type="common">Mouse</name>
    <dbReference type="NCBI Taxonomy" id="10090"/>
    <lineage>
        <taxon>Eukaryota</taxon>
        <taxon>Metazoa</taxon>
        <taxon>Chordata</taxon>
        <taxon>Craniata</taxon>
        <taxon>Vertebrata</taxon>
        <taxon>Euteleostomi</taxon>
        <taxon>Mammalia</taxon>
        <taxon>Eutheria</taxon>
        <taxon>Euarchontoglires</taxon>
        <taxon>Glires</taxon>
        <taxon>Rodentia</taxon>
        <taxon>Myomorpha</taxon>
        <taxon>Muroidea</taxon>
        <taxon>Muridae</taxon>
        <taxon>Murinae</taxon>
        <taxon>Mus</taxon>
        <taxon>Mus</taxon>
    </lineage>
</organism>
<dbReference type="EC" id="3.4.24.-"/>
<dbReference type="EMBL" id="AF085742">
    <property type="protein sequence ID" value="AAC34886.1"/>
    <property type="molecule type" value="mRNA"/>
</dbReference>
<dbReference type="EMBL" id="AK146510">
    <property type="protein sequence ID" value="BAE27223.1"/>
    <property type="molecule type" value="mRNA"/>
</dbReference>
<dbReference type="EMBL" id="BC107357">
    <property type="protein sequence ID" value="AAI07358.1"/>
    <property type="molecule type" value="mRNA"/>
</dbReference>
<dbReference type="EMBL" id="BC107358">
    <property type="protein sequence ID" value="AAI07359.1"/>
    <property type="molecule type" value="mRNA"/>
</dbReference>
<dbReference type="CCDS" id="CCDS19034.1">
    <molecule id="O88676-1"/>
</dbReference>
<dbReference type="RefSeq" id="NP_001307164.1">
    <molecule id="O88676-2"/>
    <property type="nucleotide sequence ID" value="NM_001320235.2"/>
</dbReference>
<dbReference type="RefSeq" id="NP_036115.1">
    <molecule id="O88676-1"/>
    <property type="nucleotide sequence ID" value="NM_011985.4"/>
</dbReference>
<dbReference type="RefSeq" id="XP_006538945.1">
    <molecule id="O88676-1"/>
    <property type="nucleotide sequence ID" value="XM_006538882.4"/>
</dbReference>
<dbReference type="RefSeq" id="XP_036020029.1">
    <molecule id="O88676-1"/>
    <property type="nucleotide sequence ID" value="XM_036164136.1"/>
</dbReference>
<dbReference type="BMRB" id="O88676"/>
<dbReference type="SMR" id="O88676"/>
<dbReference type="FunCoup" id="O88676">
    <property type="interactions" value="58"/>
</dbReference>
<dbReference type="STRING" id="10090.ENSMUSP00000030937"/>
<dbReference type="MEROPS" id="M10.022"/>
<dbReference type="TCDB" id="8.B.14.2.1">
    <property type="family name" value="the sea anemone peptide toxin, class 1 (bgk) family"/>
</dbReference>
<dbReference type="GlyCosmos" id="O88676">
    <property type="glycosylation" value="4 sites, No reported glycans"/>
</dbReference>
<dbReference type="GlyGen" id="O88676">
    <property type="glycosylation" value="4 sites"/>
</dbReference>
<dbReference type="iPTMnet" id="O88676"/>
<dbReference type="PhosphoSitePlus" id="O88676"/>
<dbReference type="PaxDb" id="10090-ENSMUSP00000030937"/>
<dbReference type="ProteomicsDB" id="295688">
    <molecule id="O88676-1"/>
</dbReference>
<dbReference type="ProteomicsDB" id="295689">
    <molecule id="O88676-2"/>
</dbReference>
<dbReference type="Antibodypedia" id="3453">
    <property type="antibodies" value="363 antibodies from 32 providers"/>
</dbReference>
<dbReference type="DNASU" id="26561"/>
<dbReference type="Ensembl" id="ENSMUST00000030937.2">
    <molecule id="O88676-1"/>
    <property type="protein sequence ID" value="ENSMUSP00000030937.2"/>
    <property type="gene ID" value="ENSMUSG00000029061.3"/>
</dbReference>
<dbReference type="GeneID" id="26561"/>
<dbReference type="KEGG" id="mmu:26561"/>
<dbReference type="UCSC" id="uc008wed.1">
    <molecule id="O88676-1"/>
    <property type="organism name" value="mouse"/>
</dbReference>
<dbReference type="UCSC" id="uc012dqs.1">
    <molecule id="O88676-2"/>
    <property type="organism name" value="mouse"/>
</dbReference>
<dbReference type="AGR" id="MGI:1347361"/>
<dbReference type="CTD" id="26561"/>
<dbReference type="MGI" id="MGI:1347361">
    <property type="gene designation" value="Mmp23"/>
</dbReference>
<dbReference type="VEuPathDB" id="HostDB:ENSMUSG00000029061"/>
<dbReference type="eggNOG" id="KOG1565">
    <property type="taxonomic scope" value="Eukaryota"/>
</dbReference>
<dbReference type="GeneTree" id="ENSGT00940000161187"/>
<dbReference type="HOGENOM" id="CLU_015489_2_1_1"/>
<dbReference type="InParanoid" id="O88676"/>
<dbReference type="OMA" id="HLHHCFD"/>
<dbReference type="OrthoDB" id="65569at2759"/>
<dbReference type="PhylomeDB" id="O88676"/>
<dbReference type="TreeFam" id="TF315428"/>
<dbReference type="BioGRID-ORCS" id="26561">
    <property type="hits" value="4 hits in 77 CRISPR screens"/>
</dbReference>
<dbReference type="PRO" id="PR:O88676"/>
<dbReference type="Proteomes" id="UP000000589">
    <property type="component" value="Chromosome 4"/>
</dbReference>
<dbReference type="RNAct" id="O88676">
    <property type="molecule type" value="protein"/>
</dbReference>
<dbReference type="Bgee" id="ENSMUSG00000029061">
    <property type="expression patterns" value="Expressed in ascending aorta and 170 other cell types or tissues"/>
</dbReference>
<dbReference type="GO" id="GO:0005789">
    <property type="term" value="C:endoplasmic reticulum membrane"/>
    <property type="evidence" value="ECO:0007669"/>
    <property type="project" value="UniProtKB-SubCell"/>
</dbReference>
<dbReference type="GO" id="GO:0031012">
    <property type="term" value="C:extracellular matrix"/>
    <property type="evidence" value="ECO:0007669"/>
    <property type="project" value="InterPro"/>
</dbReference>
<dbReference type="GO" id="GO:0004222">
    <property type="term" value="F:metalloendopeptidase activity"/>
    <property type="evidence" value="ECO:0000250"/>
    <property type="project" value="UniProtKB"/>
</dbReference>
<dbReference type="GO" id="GO:0008270">
    <property type="term" value="F:zinc ion binding"/>
    <property type="evidence" value="ECO:0007669"/>
    <property type="project" value="InterPro"/>
</dbReference>
<dbReference type="GO" id="GO:0006508">
    <property type="term" value="P:proteolysis"/>
    <property type="evidence" value="ECO:0007669"/>
    <property type="project" value="UniProtKB-KW"/>
</dbReference>
<dbReference type="CDD" id="cd00096">
    <property type="entry name" value="Ig"/>
    <property type="match status" value="1"/>
</dbReference>
<dbReference type="CDD" id="cd04278">
    <property type="entry name" value="ZnMc_MMP"/>
    <property type="match status" value="1"/>
</dbReference>
<dbReference type="FunFam" id="3.40.390.10:FF:000024">
    <property type="entry name" value="Matrix metallopeptidase 23B"/>
    <property type="match status" value="1"/>
</dbReference>
<dbReference type="FunFam" id="2.60.40.10:FF:000565">
    <property type="entry name" value="Matrix metalloproteinase-23"/>
    <property type="match status" value="1"/>
</dbReference>
<dbReference type="Gene3D" id="1.10.10.1940">
    <property type="match status" value="1"/>
</dbReference>
<dbReference type="Gene3D" id="3.40.390.10">
    <property type="entry name" value="Collagenase (Catalytic Domain)"/>
    <property type="match status" value="1"/>
</dbReference>
<dbReference type="Gene3D" id="2.60.40.10">
    <property type="entry name" value="Immunoglobulins"/>
    <property type="match status" value="1"/>
</dbReference>
<dbReference type="InterPro" id="IPR007110">
    <property type="entry name" value="Ig-like_dom"/>
</dbReference>
<dbReference type="InterPro" id="IPR036179">
    <property type="entry name" value="Ig-like_dom_sf"/>
</dbReference>
<dbReference type="InterPro" id="IPR013783">
    <property type="entry name" value="Ig-like_fold"/>
</dbReference>
<dbReference type="InterPro" id="IPR033739">
    <property type="entry name" value="M10A_MMP"/>
</dbReference>
<dbReference type="InterPro" id="IPR024079">
    <property type="entry name" value="MetalloPept_cat_dom_sf"/>
</dbReference>
<dbReference type="InterPro" id="IPR001818">
    <property type="entry name" value="Pept_M10_metallopeptidase"/>
</dbReference>
<dbReference type="InterPro" id="IPR021190">
    <property type="entry name" value="Pept_M10A"/>
</dbReference>
<dbReference type="InterPro" id="IPR006026">
    <property type="entry name" value="Peptidase_Metallo"/>
</dbReference>
<dbReference type="InterPro" id="IPR003582">
    <property type="entry name" value="ShKT_dom"/>
</dbReference>
<dbReference type="PANTHER" id="PTHR10201">
    <property type="entry name" value="MATRIX METALLOPROTEINASE"/>
    <property type="match status" value="1"/>
</dbReference>
<dbReference type="PANTHER" id="PTHR10201:SF7">
    <property type="entry name" value="MATRIX METALLOPROTEINASE-23"/>
    <property type="match status" value="1"/>
</dbReference>
<dbReference type="Pfam" id="PF00413">
    <property type="entry name" value="Peptidase_M10"/>
    <property type="match status" value="1"/>
</dbReference>
<dbReference type="Pfam" id="PF01549">
    <property type="entry name" value="ShK"/>
    <property type="match status" value="1"/>
</dbReference>
<dbReference type="PRINTS" id="PR00138">
    <property type="entry name" value="MATRIXIN"/>
</dbReference>
<dbReference type="SMART" id="SM00254">
    <property type="entry name" value="ShKT"/>
    <property type="match status" value="1"/>
</dbReference>
<dbReference type="SMART" id="SM00235">
    <property type="entry name" value="ZnMc"/>
    <property type="match status" value="1"/>
</dbReference>
<dbReference type="SUPFAM" id="SSF48726">
    <property type="entry name" value="Immunoglobulin"/>
    <property type="match status" value="1"/>
</dbReference>
<dbReference type="SUPFAM" id="SSF55486">
    <property type="entry name" value="Metalloproteases ('zincins'), catalytic domain"/>
    <property type="match status" value="1"/>
</dbReference>
<dbReference type="PROSITE" id="PS50835">
    <property type="entry name" value="IG_LIKE"/>
    <property type="match status" value="1"/>
</dbReference>
<dbReference type="PROSITE" id="PS51670">
    <property type="entry name" value="SHKT"/>
    <property type="match status" value="1"/>
</dbReference>
<dbReference type="PROSITE" id="PS00142">
    <property type="entry name" value="ZINC_PROTEASE"/>
    <property type="match status" value="1"/>
</dbReference>
<accession>O88676</accession>
<accession>Q3KNC0</accession>
<reference key="1">
    <citation type="journal article" date="1999" name="FEBS Lett.">
        <title>CA-MMP: a matrix metalloproteinase with a novel cysteine array, but without the classic cysteine switch.</title>
        <authorList>
            <person name="Pei D."/>
        </authorList>
    </citation>
    <scope>NUCLEOTIDE SEQUENCE [MRNA] (ISOFORM 1)</scope>
    <scope>SUBCELLULAR LOCATION</scope>
    <scope>DEVELOPMENTAL STAGE</scope>
    <scope>TISSUE SPECIFICITY</scope>
    <source>
        <strain>BALB/cJ</strain>
        <tissue>Spleen</tissue>
    </source>
</reference>
<reference key="2">
    <citation type="journal article" date="2005" name="Science">
        <title>The transcriptional landscape of the mammalian genome.</title>
        <authorList>
            <person name="Carninci P."/>
            <person name="Kasukawa T."/>
            <person name="Katayama S."/>
            <person name="Gough J."/>
            <person name="Frith M.C."/>
            <person name="Maeda N."/>
            <person name="Oyama R."/>
            <person name="Ravasi T."/>
            <person name="Lenhard B."/>
            <person name="Wells C."/>
            <person name="Kodzius R."/>
            <person name="Shimokawa K."/>
            <person name="Bajic V.B."/>
            <person name="Brenner S.E."/>
            <person name="Batalov S."/>
            <person name="Forrest A.R."/>
            <person name="Zavolan M."/>
            <person name="Davis M.J."/>
            <person name="Wilming L.G."/>
            <person name="Aidinis V."/>
            <person name="Allen J.E."/>
            <person name="Ambesi-Impiombato A."/>
            <person name="Apweiler R."/>
            <person name="Aturaliya R.N."/>
            <person name="Bailey T.L."/>
            <person name="Bansal M."/>
            <person name="Baxter L."/>
            <person name="Beisel K.W."/>
            <person name="Bersano T."/>
            <person name="Bono H."/>
            <person name="Chalk A.M."/>
            <person name="Chiu K.P."/>
            <person name="Choudhary V."/>
            <person name="Christoffels A."/>
            <person name="Clutterbuck D.R."/>
            <person name="Crowe M.L."/>
            <person name="Dalla E."/>
            <person name="Dalrymple B.P."/>
            <person name="de Bono B."/>
            <person name="Della Gatta G."/>
            <person name="di Bernardo D."/>
            <person name="Down T."/>
            <person name="Engstrom P."/>
            <person name="Fagiolini M."/>
            <person name="Faulkner G."/>
            <person name="Fletcher C.F."/>
            <person name="Fukushima T."/>
            <person name="Furuno M."/>
            <person name="Futaki S."/>
            <person name="Gariboldi M."/>
            <person name="Georgii-Hemming P."/>
            <person name="Gingeras T.R."/>
            <person name="Gojobori T."/>
            <person name="Green R.E."/>
            <person name="Gustincich S."/>
            <person name="Harbers M."/>
            <person name="Hayashi Y."/>
            <person name="Hensch T.K."/>
            <person name="Hirokawa N."/>
            <person name="Hill D."/>
            <person name="Huminiecki L."/>
            <person name="Iacono M."/>
            <person name="Ikeo K."/>
            <person name="Iwama A."/>
            <person name="Ishikawa T."/>
            <person name="Jakt M."/>
            <person name="Kanapin A."/>
            <person name="Katoh M."/>
            <person name="Kawasawa Y."/>
            <person name="Kelso J."/>
            <person name="Kitamura H."/>
            <person name="Kitano H."/>
            <person name="Kollias G."/>
            <person name="Krishnan S.P."/>
            <person name="Kruger A."/>
            <person name="Kummerfeld S.K."/>
            <person name="Kurochkin I.V."/>
            <person name="Lareau L.F."/>
            <person name="Lazarevic D."/>
            <person name="Lipovich L."/>
            <person name="Liu J."/>
            <person name="Liuni S."/>
            <person name="McWilliam S."/>
            <person name="Madan Babu M."/>
            <person name="Madera M."/>
            <person name="Marchionni L."/>
            <person name="Matsuda H."/>
            <person name="Matsuzawa S."/>
            <person name="Miki H."/>
            <person name="Mignone F."/>
            <person name="Miyake S."/>
            <person name="Morris K."/>
            <person name="Mottagui-Tabar S."/>
            <person name="Mulder N."/>
            <person name="Nakano N."/>
            <person name="Nakauchi H."/>
            <person name="Ng P."/>
            <person name="Nilsson R."/>
            <person name="Nishiguchi S."/>
            <person name="Nishikawa S."/>
            <person name="Nori F."/>
            <person name="Ohara O."/>
            <person name="Okazaki Y."/>
            <person name="Orlando V."/>
            <person name="Pang K.C."/>
            <person name="Pavan W.J."/>
            <person name="Pavesi G."/>
            <person name="Pesole G."/>
            <person name="Petrovsky N."/>
            <person name="Piazza S."/>
            <person name="Reed J."/>
            <person name="Reid J.F."/>
            <person name="Ring B.Z."/>
            <person name="Ringwald M."/>
            <person name="Rost B."/>
            <person name="Ruan Y."/>
            <person name="Salzberg S.L."/>
            <person name="Sandelin A."/>
            <person name="Schneider C."/>
            <person name="Schoenbach C."/>
            <person name="Sekiguchi K."/>
            <person name="Semple C.A."/>
            <person name="Seno S."/>
            <person name="Sessa L."/>
            <person name="Sheng Y."/>
            <person name="Shibata Y."/>
            <person name="Shimada H."/>
            <person name="Shimada K."/>
            <person name="Silva D."/>
            <person name="Sinclair B."/>
            <person name="Sperling S."/>
            <person name="Stupka E."/>
            <person name="Sugiura K."/>
            <person name="Sultana R."/>
            <person name="Takenaka Y."/>
            <person name="Taki K."/>
            <person name="Tammoja K."/>
            <person name="Tan S.L."/>
            <person name="Tang S."/>
            <person name="Taylor M.S."/>
            <person name="Tegner J."/>
            <person name="Teichmann S.A."/>
            <person name="Ueda H.R."/>
            <person name="van Nimwegen E."/>
            <person name="Verardo R."/>
            <person name="Wei C.L."/>
            <person name="Yagi K."/>
            <person name="Yamanishi H."/>
            <person name="Zabarovsky E."/>
            <person name="Zhu S."/>
            <person name="Zimmer A."/>
            <person name="Hide W."/>
            <person name="Bult C."/>
            <person name="Grimmond S.M."/>
            <person name="Teasdale R.D."/>
            <person name="Liu E.T."/>
            <person name="Brusic V."/>
            <person name="Quackenbush J."/>
            <person name="Wahlestedt C."/>
            <person name="Mattick J.S."/>
            <person name="Hume D.A."/>
            <person name="Kai C."/>
            <person name="Sasaki D."/>
            <person name="Tomaru Y."/>
            <person name="Fukuda S."/>
            <person name="Kanamori-Katayama M."/>
            <person name="Suzuki M."/>
            <person name="Aoki J."/>
            <person name="Arakawa T."/>
            <person name="Iida J."/>
            <person name="Imamura K."/>
            <person name="Itoh M."/>
            <person name="Kato T."/>
            <person name="Kawaji H."/>
            <person name="Kawagashira N."/>
            <person name="Kawashima T."/>
            <person name="Kojima M."/>
            <person name="Kondo S."/>
            <person name="Konno H."/>
            <person name="Nakano K."/>
            <person name="Ninomiya N."/>
            <person name="Nishio T."/>
            <person name="Okada M."/>
            <person name="Plessy C."/>
            <person name="Shibata K."/>
            <person name="Shiraki T."/>
            <person name="Suzuki S."/>
            <person name="Tagami M."/>
            <person name="Waki K."/>
            <person name="Watahiki A."/>
            <person name="Okamura-Oho Y."/>
            <person name="Suzuki H."/>
            <person name="Kawai J."/>
            <person name="Hayashizaki Y."/>
        </authorList>
    </citation>
    <scope>NUCLEOTIDE SEQUENCE [LARGE SCALE MRNA] (ISOFORM 1)</scope>
    <source>
        <strain>C57BL/6J</strain>
        <tissue>Stomach</tissue>
    </source>
</reference>
<reference key="3">
    <citation type="journal article" date="2004" name="Genome Res.">
        <title>The status, quality, and expansion of the NIH full-length cDNA project: the Mammalian Gene Collection (MGC).</title>
        <authorList>
            <consortium name="The MGC Project Team"/>
        </authorList>
    </citation>
    <scope>NUCLEOTIDE SEQUENCE [LARGE SCALE MRNA] (ISOFORMS 1 AND 2)</scope>
</reference>
<name>MMP23_MOUSE</name>
<proteinExistence type="evidence at transcript level"/>